<name>AMGK_PSEAE</name>
<gene>
    <name evidence="3" type="primary">amgK</name>
    <name evidence="5" type="ordered locus">PA0596</name>
</gene>
<comment type="function">
    <text evidence="1 2">Sugar kinase that catalyzes the ATP-dependent phosphorylation of N-acetylmuramate (MurNAc) and N-acetylglucosamine (GlcNAc) at its C1 hydroxyl group, leading to MurNAc alpha-1P and GlcNAc alpha-1P, respectively (By similarity). Is involved in peptidoglycan recycling as part of a cell wall recycling pathway that bypasses de novo biosynthesis of the peptidoglycan precursor UDP-MurNAc (PubMed:24819062). Plays a role in intrinsic resistance to fosfomycin, which targets the de novo synthesis of UDP-MurNAc (PubMed:24819062).</text>
</comment>
<comment type="catalytic activity">
    <reaction evidence="1">
        <text>N-acetyl-D-muramate + ATP = N-acetyl-alpha-D-muramate 1-phosphate + ADP + H(+)</text>
        <dbReference type="Rhea" id="RHEA:53720"/>
        <dbReference type="ChEBI" id="CHEBI:15378"/>
        <dbReference type="ChEBI" id="CHEBI:28881"/>
        <dbReference type="ChEBI" id="CHEBI:30616"/>
        <dbReference type="ChEBI" id="CHEBI:137594"/>
        <dbReference type="ChEBI" id="CHEBI:456216"/>
        <dbReference type="EC" id="2.7.1.221"/>
    </reaction>
</comment>
<comment type="catalytic activity">
    <reaction evidence="1">
        <text>N-acetyl-D-glucosamine + ATP = N-acetyl-alpha-D-glucosamine 1-phosphate + ADP + H(+)</text>
        <dbReference type="Rhea" id="RHEA:53724"/>
        <dbReference type="ChEBI" id="CHEBI:15378"/>
        <dbReference type="ChEBI" id="CHEBI:30616"/>
        <dbReference type="ChEBI" id="CHEBI:57776"/>
        <dbReference type="ChEBI" id="CHEBI:456216"/>
        <dbReference type="ChEBI" id="CHEBI:506227"/>
    </reaction>
</comment>
<comment type="pathway">
    <text evidence="2">Cell wall biogenesis; peptidoglycan recycling.</text>
</comment>
<comment type="disruption phenotype">
    <text evidence="2">Cells lacking this gene accumulate MurNAc. Deletion of this gene increases fosfomycin sensitivity. Growth rate is not affected.</text>
</comment>
<comment type="similarity">
    <text evidence="4">Belongs to the kinase AmgK family.</text>
</comment>
<accession>Q9I5U1</accession>
<proteinExistence type="inferred from homology"/>
<organism>
    <name type="scientific">Pseudomonas aeruginosa (strain ATCC 15692 / DSM 22644 / CIP 104116 / JCM 14847 / LMG 12228 / 1C / PRS 101 / PAO1)</name>
    <dbReference type="NCBI Taxonomy" id="208964"/>
    <lineage>
        <taxon>Bacteria</taxon>
        <taxon>Pseudomonadati</taxon>
        <taxon>Pseudomonadota</taxon>
        <taxon>Gammaproteobacteria</taxon>
        <taxon>Pseudomonadales</taxon>
        <taxon>Pseudomonadaceae</taxon>
        <taxon>Pseudomonas</taxon>
    </lineage>
</organism>
<protein>
    <recommendedName>
        <fullName evidence="1">N-acetylmuramate/N-acetylglucosamine kinase</fullName>
        <shortName evidence="1">MurNAc/GlcNAc kinase</shortName>
        <ecNumber evidence="1">2.7.1.221</ecNumber>
    </recommendedName>
    <alternativeName>
        <fullName evidence="3">Anomeric sugar kinase</fullName>
    </alternativeName>
</protein>
<dbReference type="EC" id="2.7.1.221" evidence="1"/>
<dbReference type="EMBL" id="AE004091">
    <property type="protein sequence ID" value="AAG03985.1"/>
    <property type="molecule type" value="Genomic_DNA"/>
</dbReference>
<dbReference type="PIR" id="C83570">
    <property type="entry name" value="C83570"/>
</dbReference>
<dbReference type="RefSeq" id="NP_249287.1">
    <property type="nucleotide sequence ID" value="NC_002516.2"/>
</dbReference>
<dbReference type="RefSeq" id="WP_003113208.1">
    <property type="nucleotide sequence ID" value="NZ_QZGE01000010.1"/>
</dbReference>
<dbReference type="SMR" id="Q9I5U1"/>
<dbReference type="STRING" id="208964.PA0596"/>
<dbReference type="PaxDb" id="208964-PA0596"/>
<dbReference type="DNASU" id="882000"/>
<dbReference type="GeneID" id="882000"/>
<dbReference type="KEGG" id="pae:PA0596"/>
<dbReference type="PATRIC" id="fig|208964.12.peg.632"/>
<dbReference type="PseudoCAP" id="PA0596"/>
<dbReference type="HOGENOM" id="CLU_021467_1_0_6"/>
<dbReference type="InParanoid" id="Q9I5U1"/>
<dbReference type="OrthoDB" id="9809275at2"/>
<dbReference type="PhylomeDB" id="Q9I5U1"/>
<dbReference type="BioCyc" id="PAER208964:G1FZ6-603-MONOMER"/>
<dbReference type="UniPathway" id="UPA00544"/>
<dbReference type="Proteomes" id="UP000002438">
    <property type="component" value="Chromosome"/>
</dbReference>
<dbReference type="GO" id="GO:0005524">
    <property type="term" value="F:ATP binding"/>
    <property type="evidence" value="ECO:0007669"/>
    <property type="project" value="UniProtKB-KW"/>
</dbReference>
<dbReference type="GO" id="GO:0016301">
    <property type="term" value="F:kinase activity"/>
    <property type="evidence" value="ECO:0007669"/>
    <property type="project" value="UniProtKB-KW"/>
</dbReference>
<dbReference type="GO" id="GO:0071555">
    <property type="term" value="P:cell wall organization"/>
    <property type="evidence" value="ECO:0007669"/>
    <property type="project" value="UniProtKB-KW"/>
</dbReference>
<dbReference type="GO" id="GO:0009252">
    <property type="term" value="P:peptidoglycan biosynthetic process"/>
    <property type="evidence" value="ECO:0007669"/>
    <property type="project" value="UniProtKB-KW"/>
</dbReference>
<dbReference type="GO" id="GO:0009254">
    <property type="term" value="P:peptidoglycan turnover"/>
    <property type="evidence" value="ECO:0007669"/>
    <property type="project" value="UniProtKB-UniPathway"/>
</dbReference>
<dbReference type="GO" id="GO:0008360">
    <property type="term" value="P:regulation of cell shape"/>
    <property type="evidence" value="ECO:0007669"/>
    <property type="project" value="UniProtKB-KW"/>
</dbReference>
<dbReference type="GO" id="GO:0046677">
    <property type="term" value="P:response to antibiotic"/>
    <property type="evidence" value="ECO:0007669"/>
    <property type="project" value="UniProtKB-KW"/>
</dbReference>
<dbReference type="FunFam" id="3.30.200.20:FF:000744">
    <property type="entry name" value="Aminoglycoside phosphotransferase"/>
    <property type="match status" value="1"/>
</dbReference>
<dbReference type="FunFam" id="3.90.1200.10:FF:000017">
    <property type="entry name" value="Aminoglycoside phosphotransferase"/>
    <property type="match status" value="1"/>
</dbReference>
<dbReference type="Gene3D" id="3.90.1200.10">
    <property type="match status" value="1"/>
</dbReference>
<dbReference type="Gene3D" id="3.30.200.20">
    <property type="entry name" value="Phosphorylase Kinase, domain 1"/>
    <property type="match status" value="1"/>
</dbReference>
<dbReference type="InterPro" id="IPR002575">
    <property type="entry name" value="Aminoglycoside_PTrfase"/>
</dbReference>
<dbReference type="InterPro" id="IPR011009">
    <property type="entry name" value="Kinase-like_dom_sf"/>
</dbReference>
<dbReference type="PANTHER" id="PTHR33540:SF1">
    <property type="entry name" value="N-ACETYLMURAMATE_N-ACETYLGLUCOSAMINE KINASE"/>
    <property type="match status" value="1"/>
</dbReference>
<dbReference type="PANTHER" id="PTHR33540">
    <property type="entry name" value="TRNA THREONYLCARBAMOYLADENOSINE BIOSYNTHESIS PROTEIN TSAE"/>
    <property type="match status" value="1"/>
</dbReference>
<dbReference type="Pfam" id="PF01636">
    <property type="entry name" value="APH"/>
    <property type="match status" value="1"/>
</dbReference>
<dbReference type="SUPFAM" id="SSF56112">
    <property type="entry name" value="Protein kinase-like (PK-like)"/>
    <property type="match status" value="1"/>
</dbReference>
<evidence type="ECO:0000250" key="1">
    <source>
        <dbReference type="UniProtKB" id="Q88QT3"/>
    </source>
</evidence>
<evidence type="ECO:0000269" key="2">
    <source>
    </source>
</evidence>
<evidence type="ECO:0000303" key="3">
    <source>
    </source>
</evidence>
<evidence type="ECO:0000305" key="4"/>
<evidence type="ECO:0000312" key="5">
    <source>
        <dbReference type="EMBL" id="AAG03985.1"/>
    </source>
</evidence>
<feature type="chain" id="PRO_0000441266" description="N-acetylmuramate/N-acetylglucosamine kinase">
    <location>
        <begin position="1"/>
        <end position="338"/>
    </location>
</feature>
<reference key="1">
    <citation type="journal article" date="2000" name="Nature">
        <title>Complete genome sequence of Pseudomonas aeruginosa PAO1, an opportunistic pathogen.</title>
        <authorList>
            <person name="Stover C.K."/>
            <person name="Pham X.-Q.T."/>
            <person name="Erwin A.L."/>
            <person name="Mizoguchi S.D."/>
            <person name="Warrener P."/>
            <person name="Hickey M.J."/>
            <person name="Brinkman F.S.L."/>
            <person name="Hufnagle W.O."/>
            <person name="Kowalik D.J."/>
            <person name="Lagrou M."/>
            <person name="Garber R.L."/>
            <person name="Goltry L."/>
            <person name="Tolentino E."/>
            <person name="Westbrock-Wadman S."/>
            <person name="Yuan Y."/>
            <person name="Brody L.L."/>
            <person name="Coulter S.N."/>
            <person name="Folger K.R."/>
            <person name="Kas A."/>
            <person name="Larbig K."/>
            <person name="Lim R.M."/>
            <person name="Smith K.A."/>
            <person name="Spencer D.H."/>
            <person name="Wong G.K.-S."/>
            <person name="Wu Z."/>
            <person name="Paulsen I.T."/>
            <person name="Reizer J."/>
            <person name="Saier M.H. Jr."/>
            <person name="Hancock R.E.W."/>
            <person name="Lory S."/>
            <person name="Olson M.V."/>
        </authorList>
    </citation>
    <scope>NUCLEOTIDE SEQUENCE [LARGE SCALE GENOMIC DNA]</scope>
    <source>
        <strain>ATCC 15692 / DSM 22644 / CIP 104116 / JCM 14847 / LMG 12228 / 1C / PRS 101 / PAO1</strain>
    </source>
</reference>
<reference key="2">
    <citation type="journal article" date="2014" name="Microb. Drug Resist.">
        <title>Blocking peptidoglycan recycling in Pseudomonas aeruginosa attenuates intrinsic resistance to fosfomycin.</title>
        <authorList>
            <person name="Borisova M."/>
            <person name="Gisin J."/>
            <person name="Mayer C."/>
        </authorList>
    </citation>
    <scope>FUNCTION</scope>
    <scope>DISRUPTION PHENOTYPE</scope>
    <scope>PATHWAY</scope>
    <source>
        <strain>ATCC 15692 / DSM 22644 / CIP 104116 / JCM 14847 / LMG 12228 / 1C / PRS 101 / PAO1</strain>
    </source>
</reference>
<sequence length="338" mass="38186">MSDDARFQQLNCWLDSCLPELFVAEGWGEVPPAELIPASSDASFRRYFRWQGGDRSLVVMDAPPPQEDCRPFVKVAGLLAGAGVHVPRILAQDLENGFLLLSDLGRQTYLDVLHPGNADELFEPALDALIAFQKVDVAGVLPAYDEAVLRRELQLFPDWYLARHLGVELEGETLARWKRICDLLVRSALEQPRVFVHRDYMPRNLMLSEPNPGVLDFQDALHGPVTYDVTCLYKDAFVSWPEPRVHAALNRYWKKATWAGIPLPPSFEDFLRASDLMGVQRHLKVIGIFARICHRDGKPRYLGDVPRFFRYLETAVARRPELAELGELLASLPQGAEA</sequence>
<keyword id="KW-0046">Antibiotic resistance</keyword>
<keyword id="KW-0067">ATP-binding</keyword>
<keyword id="KW-0119">Carbohydrate metabolism</keyword>
<keyword id="KW-0133">Cell shape</keyword>
<keyword id="KW-0961">Cell wall biogenesis/degradation</keyword>
<keyword id="KW-0418">Kinase</keyword>
<keyword id="KW-0547">Nucleotide-binding</keyword>
<keyword id="KW-0573">Peptidoglycan synthesis</keyword>
<keyword id="KW-1185">Reference proteome</keyword>
<keyword id="KW-0808">Transferase</keyword>